<name>HGBB_HAEIF</name>
<gene>
    <name type="primary">hgbB</name>
</gene>
<evidence type="ECO:0000255" key="1"/>
<evidence type="ECO:0000255" key="2">
    <source>
        <dbReference type="PROSITE-ProRule" id="PRU01360"/>
    </source>
</evidence>
<evidence type="ECO:0000256" key="3">
    <source>
        <dbReference type="SAM" id="MobiDB-lite"/>
    </source>
</evidence>
<evidence type="ECO:0000305" key="4"/>
<comment type="function">
    <text>Acts as a receptor for hemoglobin or the hemoglobin/haptoglobin complex of the human host and is required for heme uptake.</text>
</comment>
<comment type="subcellular location">
    <subcellularLocation>
        <location evidence="2">Cell outer membrane</location>
        <topology evidence="2">Multi-pass membrane protein</topology>
    </subcellularLocation>
</comment>
<comment type="miscellaneous">
    <text>This protein is subject to phase-variable expression associated with alteration in the length of the CCAA repeat region. This mechanism is called slipped-strand mispairing. Addition or loss of CCAA repeat units would change the reading frame and result in introduction of stop codons downstream of the repeat region. This may be a mechanism of regulation and a way to avoid the immunological response of the host.</text>
</comment>
<comment type="similarity">
    <text evidence="4">Belongs to the TonB-dependent receptor family. Hemoglobin/haptoglobin binding protein subfamily.</text>
</comment>
<keyword id="KW-0998">Cell outer membrane</keyword>
<keyword id="KW-0472">Membrane</keyword>
<keyword id="KW-0675">Receptor</keyword>
<keyword id="KW-0677">Repeat</keyword>
<keyword id="KW-0732">Signal</keyword>
<keyword id="KW-0798">TonB box</keyword>
<keyword id="KW-0812">Transmembrane</keyword>
<keyword id="KW-1134">Transmembrane beta strand</keyword>
<keyword id="KW-0813">Transport</keyword>
<protein>
    <recommendedName>
        <fullName>Hemoglobin and hemoglobin-haptoglobin-binding protein B</fullName>
        <shortName>Hemoglobin-binding protein B</shortName>
    </recommendedName>
</protein>
<accession>Q9KIV1</accession>
<reference key="1">
    <citation type="journal article" date="2000" name="Infect. Immun.">
        <title>Detection of phase variation in expression of proteins involved in hemoglobin and hemoglobin-haptoglobin binding by nontypeable Haemophilus influenzae.</title>
        <authorList>
            <person name="Cope L.D."/>
            <person name="Hrkal Z."/>
            <person name="Hansen E.J."/>
        </authorList>
    </citation>
    <scope>NUCLEOTIDE SEQUENCE [GENOMIC DNA]</scope>
    <source>
        <strain>NTHi N182</strain>
    </source>
</reference>
<organism>
    <name type="scientific">Haemophilus influenzae</name>
    <dbReference type="NCBI Taxonomy" id="727"/>
    <lineage>
        <taxon>Bacteria</taxon>
        <taxon>Pseudomonadati</taxon>
        <taxon>Pseudomonadota</taxon>
        <taxon>Gammaproteobacteria</taxon>
        <taxon>Pasteurellales</taxon>
        <taxon>Pasteurellaceae</taxon>
        <taxon>Haemophilus</taxon>
    </lineage>
</organism>
<sequence>MTNFKFSLLACSIAFALNASTAYAAQPTNQPTNQPTNQPTNQPTNQPTNQNSNVSEQLEQINVSGSSENINIKEKKVGETQISAKKLAKQQASDSRDLVRYETGITVVETGRTGASGYAVRGVDENRVGIMVDGLRQAETLSSQGFKELFEGYGNFNNTRNSIEIENVKTATITKGADSLKSGSGALGGSVIFETKDARDYLIDKDYYLSYKRGYQTMNNQNLKTLTLAGRSKKFDILVVDTKRDGHEIENYDYKIYPNKQADLRAVGPTREKADPYQITRQSTLIKLGFQPNENHRLSVALDDSTLETKGIDLSYALRPYSTAGNEKYGERIINDQSKRKNIQFSYENFSQTPFWDHIKLSYSSQKITNKARSDEYCHQSTCPGVRNPQGLHLVEKDGTYRIVDKDNNDFHYKKDDSDLWAWGKELHNSKGKKISDDVDTKGGSLDSVLINCEKLDCSKRFRIYQEYDENSSEKYTYDDREIKVETLPNGKKYGKIPLKKGEKLFSQEEARFLFPKSHGYSTDFVNDRDLNTHTQQIKLDLDKEFHLWHTQHQLKYGGLYEKTLKSMVNHQYNTAANVQWWADYFFCARQEGGNLGGEKKPRPDISVAGCANGTLLHSDIGKDTYLIPVTTKNNVLYFGDNVQLTSWLGLDLNYRYDHVKYLPSYDKNIPVPKGLITGLFKKFKSTDYVYGKKYSKPDGYTDCTYDTPCYKQNFKDNLALLLRKTDYKHHSYNLGLNLDPTDWLRVQLKYANGFRAPTSDEIYMTFKHPQFSIQPNTDLKAETSKTKEVAFTFYKNSSYITLNAFQNDYRNFIDLVEVGERPIEEDSVVRYPFHQNQNRDRARVRGIEIASRLEIGDLFEKLQGFHLGYKFTYQKGRIKDNGLHPKYKEFLKLNKDQHPEYEAIARKPQPMNALQPTTSVYNIGYDAPSQKWGVDMYITNVAAKKAKDSFNSQWTSMVERKEKQYTDITDIKASKANGKEVKDSRGLWRNNRYTVIDTIAYWKPIKNLTFTAGVYNLTNKKYLTWDSARSIRHIGTINRVKTETGKGLNRFYAPGRNYRMSVQFEF</sequence>
<proteinExistence type="inferred from homology"/>
<dbReference type="EMBL" id="AF221059">
    <property type="protein sequence ID" value="AAF80177.1"/>
    <property type="molecule type" value="Genomic_DNA"/>
</dbReference>
<dbReference type="SMR" id="Q9KIV1"/>
<dbReference type="GO" id="GO:0009279">
    <property type="term" value="C:cell outer membrane"/>
    <property type="evidence" value="ECO:0007669"/>
    <property type="project" value="UniProtKB-SubCell"/>
</dbReference>
<dbReference type="GO" id="GO:0015344">
    <property type="term" value="F:siderophore uptake transmembrane transporter activity"/>
    <property type="evidence" value="ECO:0007669"/>
    <property type="project" value="TreeGrafter"/>
</dbReference>
<dbReference type="CDD" id="cd01347">
    <property type="entry name" value="ligand_gated_channel"/>
    <property type="match status" value="1"/>
</dbReference>
<dbReference type="Gene3D" id="2.40.170.20">
    <property type="entry name" value="TonB-dependent receptor, beta-barrel domain"/>
    <property type="match status" value="2"/>
</dbReference>
<dbReference type="Gene3D" id="2.170.130.10">
    <property type="entry name" value="TonB-dependent receptor, plug domain"/>
    <property type="match status" value="1"/>
</dbReference>
<dbReference type="InterPro" id="IPR012910">
    <property type="entry name" value="Plug_dom"/>
</dbReference>
<dbReference type="InterPro" id="IPR037066">
    <property type="entry name" value="Plug_dom_sf"/>
</dbReference>
<dbReference type="InterPro" id="IPR006970">
    <property type="entry name" value="PT"/>
</dbReference>
<dbReference type="InterPro" id="IPR039426">
    <property type="entry name" value="TonB-dep_rcpt-like"/>
</dbReference>
<dbReference type="InterPro" id="IPR000531">
    <property type="entry name" value="TonB-dep_rcpt_b-brl"/>
</dbReference>
<dbReference type="InterPro" id="IPR010949">
    <property type="entry name" value="TonB_Hb/transfer/lactofer_rcpt"/>
</dbReference>
<dbReference type="InterPro" id="IPR036942">
    <property type="entry name" value="TonB_rcpt_b-brl_sf"/>
</dbReference>
<dbReference type="InterPro" id="IPR010917">
    <property type="entry name" value="TonB_rcpt_CS"/>
</dbReference>
<dbReference type="NCBIfam" id="TIGR01786">
    <property type="entry name" value="TonB-hemlactrns"/>
    <property type="match status" value="1"/>
</dbReference>
<dbReference type="PANTHER" id="PTHR30069:SF29">
    <property type="entry name" value="HEMOGLOBIN AND HEMOGLOBIN-HAPTOGLOBIN-BINDING PROTEIN 1-RELATED"/>
    <property type="match status" value="1"/>
</dbReference>
<dbReference type="PANTHER" id="PTHR30069">
    <property type="entry name" value="TONB-DEPENDENT OUTER MEMBRANE RECEPTOR"/>
    <property type="match status" value="1"/>
</dbReference>
<dbReference type="Pfam" id="PF07715">
    <property type="entry name" value="Plug"/>
    <property type="match status" value="1"/>
</dbReference>
<dbReference type="Pfam" id="PF04886">
    <property type="entry name" value="PT"/>
    <property type="match status" value="1"/>
</dbReference>
<dbReference type="Pfam" id="PF00593">
    <property type="entry name" value="TonB_dep_Rec_b-barrel"/>
    <property type="match status" value="1"/>
</dbReference>
<dbReference type="SUPFAM" id="SSF56935">
    <property type="entry name" value="Porins"/>
    <property type="match status" value="1"/>
</dbReference>
<dbReference type="PROSITE" id="PS01156">
    <property type="entry name" value="TONB_DEPENDENT_REC_2"/>
    <property type="match status" value="1"/>
</dbReference>
<dbReference type="PROSITE" id="PS52016">
    <property type="entry name" value="TONB_DEPENDENT_REC_3"/>
    <property type="match status" value="1"/>
</dbReference>
<feature type="signal peptide" evidence="1">
    <location>
        <begin position="1"/>
        <end position="24"/>
    </location>
</feature>
<feature type="chain" id="PRO_0000034782" description="Hemoglobin and hemoglobin-haptoglobin-binding protein B">
    <location>
        <begin position="25"/>
        <end position="1067"/>
    </location>
</feature>
<feature type="repeat" description="1">
    <location>
        <begin position="26"/>
        <end position="29"/>
    </location>
</feature>
<feature type="repeat" description="2">
    <location>
        <begin position="30"/>
        <end position="33"/>
    </location>
</feature>
<feature type="repeat" description="3">
    <location>
        <begin position="34"/>
        <end position="37"/>
    </location>
</feature>
<feature type="repeat" description="4">
    <location>
        <begin position="38"/>
        <end position="41"/>
    </location>
</feature>
<feature type="repeat" description="5">
    <location>
        <begin position="42"/>
        <end position="45"/>
    </location>
</feature>
<feature type="repeat" description="6">
    <location>
        <begin position="46"/>
        <end position="49"/>
    </location>
</feature>
<feature type="domain" description="TBDR plug" evidence="2">
    <location>
        <begin position="71"/>
        <end position="196"/>
    </location>
</feature>
<feature type="domain" description="TBDR beta-barrel" evidence="2">
    <location>
        <begin position="204"/>
        <end position="1067"/>
    </location>
</feature>
<feature type="region of interest" description="Disordered" evidence="3">
    <location>
        <begin position="26"/>
        <end position="53"/>
    </location>
</feature>
<feature type="region of interest" description="6 X 4 AA tandem repeats of Q-P-T-N">
    <location>
        <begin position="26"/>
        <end position="49"/>
    </location>
</feature>
<feature type="short sequence motif" description="TonB box">
    <location>
        <begin position="59"/>
        <end position="66"/>
    </location>
</feature>
<feature type="short sequence motif" description="TonB C-terminal box">
    <location>
        <begin position="1050"/>
        <end position="1067"/>
    </location>
</feature>
<feature type="compositionally biased region" description="Low complexity" evidence="3">
    <location>
        <begin position="26"/>
        <end position="51"/>
    </location>
</feature>